<name>URE2_MYCTA</name>
<proteinExistence type="inferred from homology"/>
<evidence type="ECO:0000255" key="1">
    <source>
        <dbReference type="HAMAP-Rule" id="MF_01954"/>
    </source>
</evidence>
<reference key="1">
    <citation type="journal article" date="2008" name="PLoS ONE">
        <title>Genetic basis of virulence attenuation revealed by comparative genomic analysis of Mycobacterium tuberculosis strain H37Ra versus H37Rv.</title>
        <authorList>
            <person name="Zheng H."/>
            <person name="Lu L."/>
            <person name="Wang B."/>
            <person name="Pu S."/>
            <person name="Zhang X."/>
            <person name="Zhu G."/>
            <person name="Shi W."/>
            <person name="Zhang L."/>
            <person name="Wang H."/>
            <person name="Wang S."/>
            <person name="Zhao G."/>
            <person name="Zhang Y."/>
        </authorList>
    </citation>
    <scope>NUCLEOTIDE SEQUENCE [LARGE SCALE GENOMIC DNA]</scope>
    <source>
        <strain>ATCC 25177 / H37Ra</strain>
    </source>
</reference>
<feature type="chain" id="PRO_1000070748" description="Urease subunit beta">
    <location>
        <begin position="1"/>
        <end position="104"/>
    </location>
</feature>
<accession>A5U3L6</accession>
<protein>
    <recommendedName>
        <fullName evidence="1">Urease subunit beta</fullName>
        <ecNumber evidence="1">3.5.1.5</ecNumber>
    </recommendedName>
    <alternativeName>
        <fullName evidence="1">Urea amidohydrolase subunit beta</fullName>
    </alternativeName>
</protein>
<sequence>MIPGEIFYGSGDIEMNAAALSRLQMRIINAGDRPVQVGSHVHLPQANRALSFDRATAHGYRLDIPAATAVRFEPGIPQIVGLVPLGGRREVPGLTLNPPGRLDR</sequence>
<organism>
    <name type="scientific">Mycobacterium tuberculosis (strain ATCC 25177 / H37Ra)</name>
    <dbReference type="NCBI Taxonomy" id="419947"/>
    <lineage>
        <taxon>Bacteria</taxon>
        <taxon>Bacillati</taxon>
        <taxon>Actinomycetota</taxon>
        <taxon>Actinomycetes</taxon>
        <taxon>Mycobacteriales</taxon>
        <taxon>Mycobacteriaceae</taxon>
        <taxon>Mycobacterium</taxon>
        <taxon>Mycobacterium tuberculosis complex</taxon>
    </lineage>
</organism>
<gene>
    <name evidence="1" type="primary">ureB</name>
    <name type="ordered locus">MRA_1860</name>
</gene>
<keyword id="KW-0963">Cytoplasm</keyword>
<keyword id="KW-0378">Hydrolase</keyword>
<keyword id="KW-1185">Reference proteome</keyword>
<comment type="catalytic activity">
    <reaction evidence="1">
        <text>urea + 2 H2O + H(+) = hydrogencarbonate + 2 NH4(+)</text>
        <dbReference type="Rhea" id="RHEA:20557"/>
        <dbReference type="ChEBI" id="CHEBI:15377"/>
        <dbReference type="ChEBI" id="CHEBI:15378"/>
        <dbReference type="ChEBI" id="CHEBI:16199"/>
        <dbReference type="ChEBI" id="CHEBI:17544"/>
        <dbReference type="ChEBI" id="CHEBI:28938"/>
        <dbReference type="EC" id="3.5.1.5"/>
    </reaction>
</comment>
<comment type="pathway">
    <text evidence="1">Nitrogen metabolism; urea degradation; CO(2) and NH(3) from urea (urease route): step 1/1.</text>
</comment>
<comment type="subunit">
    <text evidence="1">Heterotrimer of UreA (gamma), UreB (beta) and UreC (alpha) subunits. Three heterotrimers associate to form the active enzyme.</text>
</comment>
<comment type="subcellular location">
    <subcellularLocation>
        <location evidence="1">Cytoplasm</location>
    </subcellularLocation>
</comment>
<comment type="similarity">
    <text evidence="1">Belongs to the urease beta subunit family.</text>
</comment>
<dbReference type="EC" id="3.5.1.5" evidence="1"/>
<dbReference type="EMBL" id="CP000611">
    <property type="protein sequence ID" value="ABQ73616.1"/>
    <property type="molecule type" value="Genomic_DNA"/>
</dbReference>
<dbReference type="RefSeq" id="WP_003409308.1">
    <property type="nucleotide sequence ID" value="NZ_CP016972.1"/>
</dbReference>
<dbReference type="SMR" id="A5U3L6"/>
<dbReference type="KEGG" id="mra:MRA_1860"/>
<dbReference type="eggNOG" id="COG0832">
    <property type="taxonomic scope" value="Bacteria"/>
</dbReference>
<dbReference type="HOGENOM" id="CLU_129707_1_1_11"/>
<dbReference type="UniPathway" id="UPA00258">
    <property type="reaction ID" value="UER00370"/>
</dbReference>
<dbReference type="Proteomes" id="UP000001988">
    <property type="component" value="Chromosome"/>
</dbReference>
<dbReference type="GO" id="GO:0035550">
    <property type="term" value="C:urease complex"/>
    <property type="evidence" value="ECO:0007669"/>
    <property type="project" value="InterPro"/>
</dbReference>
<dbReference type="GO" id="GO:0009039">
    <property type="term" value="F:urease activity"/>
    <property type="evidence" value="ECO:0007669"/>
    <property type="project" value="UniProtKB-UniRule"/>
</dbReference>
<dbReference type="GO" id="GO:0043419">
    <property type="term" value="P:urea catabolic process"/>
    <property type="evidence" value="ECO:0007669"/>
    <property type="project" value="UniProtKB-UniRule"/>
</dbReference>
<dbReference type="CDD" id="cd00407">
    <property type="entry name" value="Urease_beta"/>
    <property type="match status" value="1"/>
</dbReference>
<dbReference type="Gene3D" id="2.10.150.10">
    <property type="entry name" value="Urease, beta subunit"/>
    <property type="match status" value="1"/>
</dbReference>
<dbReference type="HAMAP" id="MF_01954">
    <property type="entry name" value="Urease_beta"/>
    <property type="match status" value="1"/>
</dbReference>
<dbReference type="InterPro" id="IPR002019">
    <property type="entry name" value="Urease_beta-like"/>
</dbReference>
<dbReference type="InterPro" id="IPR036461">
    <property type="entry name" value="Urease_betasu_sf"/>
</dbReference>
<dbReference type="InterPro" id="IPR050069">
    <property type="entry name" value="Urease_subunit"/>
</dbReference>
<dbReference type="NCBIfam" id="NF009681">
    <property type="entry name" value="PRK13202.1"/>
    <property type="match status" value="1"/>
</dbReference>
<dbReference type="NCBIfam" id="TIGR00192">
    <property type="entry name" value="urease_beta"/>
    <property type="match status" value="1"/>
</dbReference>
<dbReference type="PANTHER" id="PTHR33569">
    <property type="entry name" value="UREASE"/>
    <property type="match status" value="1"/>
</dbReference>
<dbReference type="PANTHER" id="PTHR33569:SF1">
    <property type="entry name" value="UREASE"/>
    <property type="match status" value="1"/>
</dbReference>
<dbReference type="Pfam" id="PF00699">
    <property type="entry name" value="Urease_beta"/>
    <property type="match status" value="1"/>
</dbReference>
<dbReference type="SUPFAM" id="SSF51278">
    <property type="entry name" value="Urease, beta-subunit"/>
    <property type="match status" value="1"/>
</dbReference>